<sequence length="73" mass="7394">MLAAAKYIGSGVAALGLIGAGIGVGIVFAALIQGVSRNPSLRGQLFTYAILGFALSEATGLFALMVSFLLLYS</sequence>
<comment type="function">
    <text>Mitochondrial membrane ATP synthase (F(1)F(0) ATP synthase or Complex V) produces ATP from ADP in the presence of a proton gradient across the membrane which is generated by electron transport complexes of the respiratory chain. F-type ATPases consist of two structural domains, F(1) - containing the extramembraneous catalytic core and F(0) - containing the membrane proton channel, linked together by a central stalk and a peripheral stalk. During catalysis, ATP synthesis in the catalytic domain of F(1) is coupled via a rotary mechanism of the central stalk subunits to proton translocation. Part of the complex F(0) domain. A homomeric c-ring of probably 10 subunits is part of the complex rotary element.</text>
</comment>
<comment type="subunit">
    <text>F-type ATPases have 2 components, CF(1) - the catalytic core - and CF(0) - the membrane proton channel. CF(1) has five subunits: alpha(3), beta(3), gamma(1), delta(1), epsilon(1). CF(0) has three main subunits: a, b and c.</text>
</comment>
<comment type="subcellular location">
    <subcellularLocation>
        <location evidence="3">Mitochondrion inner membrane</location>
        <topology evidence="3">Multi-pass membrane protein</topology>
    </subcellularLocation>
</comment>
<comment type="similarity">
    <text evidence="3">Belongs to the ATPase C chain family.</text>
</comment>
<dbReference type="EMBL" id="DQ157700">
    <property type="protein sequence ID" value="AAZ67018.1"/>
    <property type="molecule type" value="Genomic_DNA"/>
</dbReference>
<dbReference type="EMBL" id="AACP01000277">
    <property type="status" value="NOT_ANNOTATED_CDS"/>
    <property type="molecule type" value="Genomic_DNA"/>
</dbReference>
<dbReference type="RefSeq" id="YP_762703.1">
    <property type="nucleotide sequence ID" value="NC_008368.1"/>
</dbReference>
<dbReference type="SMR" id="Q0H8W9"/>
<dbReference type="FunCoup" id="Q0H8W9">
    <property type="interactions" value="68"/>
</dbReference>
<dbReference type="STRING" id="237631.Q0H8W9"/>
<dbReference type="GeneID" id="4308283"/>
<dbReference type="InParanoid" id="Q0H8W9"/>
<dbReference type="Proteomes" id="UP000000561">
    <property type="component" value="Mitochondrion"/>
</dbReference>
<dbReference type="GO" id="GO:0005743">
    <property type="term" value="C:mitochondrial inner membrane"/>
    <property type="evidence" value="ECO:0007669"/>
    <property type="project" value="UniProtKB-SubCell"/>
</dbReference>
<dbReference type="GO" id="GO:0045259">
    <property type="term" value="C:proton-transporting ATP synthase complex"/>
    <property type="evidence" value="ECO:0007669"/>
    <property type="project" value="UniProtKB-KW"/>
</dbReference>
<dbReference type="GO" id="GO:0033177">
    <property type="term" value="C:proton-transporting two-sector ATPase complex, proton-transporting domain"/>
    <property type="evidence" value="ECO:0007669"/>
    <property type="project" value="InterPro"/>
</dbReference>
<dbReference type="GO" id="GO:0008289">
    <property type="term" value="F:lipid binding"/>
    <property type="evidence" value="ECO:0007669"/>
    <property type="project" value="UniProtKB-KW"/>
</dbReference>
<dbReference type="GO" id="GO:0015078">
    <property type="term" value="F:proton transmembrane transporter activity"/>
    <property type="evidence" value="ECO:0007669"/>
    <property type="project" value="InterPro"/>
</dbReference>
<dbReference type="GO" id="GO:0015986">
    <property type="term" value="P:proton motive force-driven ATP synthesis"/>
    <property type="evidence" value="ECO:0000318"/>
    <property type="project" value="GO_Central"/>
</dbReference>
<dbReference type="CDD" id="cd18182">
    <property type="entry name" value="ATP-synt_Fo_c_ATP5G3"/>
    <property type="match status" value="1"/>
</dbReference>
<dbReference type="FunFam" id="1.20.20.10:FF:000020">
    <property type="entry name" value="ATP synthase subunit 9, mitochondrial"/>
    <property type="match status" value="1"/>
</dbReference>
<dbReference type="Gene3D" id="1.20.20.10">
    <property type="entry name" value="F1F0 ATP synthase subunit C"/>
    <property type="match status" value="1"/>
</dbReference>
<dbReference type="HAMAP" id="MF_01396">
    <property type="entry name" value="ATP_synth_c_bact"/>
    <property type="match status" value="1"/>
</dbReference>
<dbReference type="InterPro" id="IPR000454">
    <property type="entry name" value="ATP_synth_F0_csu"/>
</dbReference>
<dbReference type="InterPro" id="IPR020537">
    <property type="entry name" value="ATP_synth_F0_csu_DDCD_BS"/>
</dbReference>
<dbReference type="InterPro" id="IPR038662">
    <property type="entry name" value="ATP_synth_F0_csu_sf"/>
</dbReference>
<dbReference type="InterPro" id="IPR002379">
    <property type="entry name" value="ATPase_proteolipid_c-like_dom"/>
</dbReference>
<dbReference type="InterPro" id="IPR035921">
    <property type="entry name" value="F/V-ATP_Csub_sf"/>
</dbReference>
<dbReference type="PANTHER" id="PTHR10031">
    <property type="entry name" value="ATP SYNTHASE LIPID-BINDING PROTEIN, MITOCHONDRIAL"/>
    <property type="match status" value="1"/>
</dbReference>
<dbReference type="PANTHER" id="PTHR10031:SF0">
    <property type="entry name" value="ATPASE PROTEIN 9"/>
    <property type="match status" value="1"/>
</dbReference>
<dbReference type="Pfam" id="PF00137">
    <property type="entry name" value="ATP-synt_C"/>
    <property type="match status" value="1"/>
</dbReference>
<dbReference type="PRINTS" id="PR00124">
    <property type="entry name" value="ATPASEC"/>
</dbReference>
<dbReference type="SUPFAM" id="SSF81333">
    <property type="entry name" value="F1F0 ATP synthase subunit C"/>
    <property type="match status" value="1"/>
</dbReference>
<dbReference type="PROSITE" id="PS00605">
    <property type="entry name" value="ATPASE_C"/>
    <property type="match status" value="1"/>
</dbReference>
<proteinExistence type="inferred from homology"/>
<protein>
    <recommendedName>
        <fullName>ATP synthase subunit 9, mitochondrial</fullName>
    </recommendedName>
    <alternativeName>
        <fullName>Lipid-binding protein</fullName>
    </alternativeName>
</protein>
<reference key="1">
    <citation type="submission" date="2005-08" db="EMBL/GenBank/DDBJ databases">
        <title>Annotation of mitochondrial genome of Ustilago maydis and comparative analysis of basidiomycete mtDNAs.</title>
        <authorList>
            <person name="Kennell J.C."/>
            <person name="Boehmer C."/>
        </authorList>
    </citation>
    <scope>NUCLEOTIDE SEQUENCE [LARGE SCALE GENOMIC DNA]</scope>
    <source>
        <strain>DSM 14603 / FGSC 9021 / UM521</strain>
    </source>
</reference>
<reference key="2">
    <citation type="journal article" date="2006" name="Nature">
        <title>Insights from the genome of the biotrophic fungal plant pathogen Ustilago maydis.</title>
        <authorList>
            <person name="Kaemper J."/>
            <person name="Kahmann R."/>
            <person name="Boelker M."/>
            <person name="Ma L.-J."/>
            <person name="Brefort T."/>
            <person name="Saville B.J."/>
            <person name="Banuett F."/>
            <person name="Kronstad J.W."/>
            <person name="Gold S.E."/>
            <person name="Mueller O."/>
            <person name="Perlin M.H."/>
            <person name="Woesten H.A.B."/>
            <person name="de Vries R."/>
            <person name="Ruiz-Herrera J."/>
            <person name="Reynaga-Pena C.G."/>
            <person name="Snetselaar K."/>
            <person name="McCann M."/>
            <person name="Perez-Martin J."/>
            <person name="Feldbruegge M."/>
            <person name="Basse C.W."/>
            <person name="Steinberg G."/>
            <person name="Ibeas J.I."/>
            <person name="Holloman W."/>
            <person name="Guzman P."/>
            <person name="Farman M.L."/>
            <person name="Stajich J.E."/>
            <person name="Sentandreu R."/>
            <person name="Gonzalez-Prieto J.M."/>
            <person name="Kennell J.C."/>
            <person name="Molina L."/>
            <person name="Schirawski J."/>
            <person name="Mendoza-Mendoza A."/>
            <person name="Greilinger D."/>
            <person name="Muench K."/>
            <person name="Roessel N."/>
            <person name="Scherer M."/>
            <person name="Vranes M."/>
            <person name="Ladendorf O."/>
            <person name="Vincon V."/>
            <person name="Fuchs U."/>
            <person name="Sandrock B."/>
            <person name="Meng S."/>
            <person name="Ho E.C.H."/>
            <person name="Cahill M.J."/>
            <person name="Boyce K.J."/>
            <person name="Klose J."/>
            <person name="Klosterman S.J."/>
            <person name="Deelstra H.J."/>
            <person name="Ortiz-Castellanos L."/>
            <person name="Li W."/>
            <person name="Sanchez-Alonso P."/>
            <person name="Schreier P.H."/>
            <person name="Haeuser-Hahn I."/>
            <person name="Vaupel M."/>
            <person name="Koopmann E."/>
            <person name="Friedrich G."/>
            <person name="Voss H."/>
            <person name="Schlueter T."/>
            <person name="Margolis J."/>
            <person name="Platt D."/>
            <person name="Swimmer C."/>
            <person name="Gnirke A."/>
            <person name="Chen F."/>
            <person name="Vysotskaia V."/>
            <person name="Mannhaupt G."/>
            <person name="Gueldener U."/>
            <person name="Muensterkoetter M."/>
            <person name="Haase D."/>
            <person name="Oesterheld M."/>
            <person name="Mewes H.-W."/>
            <person name="Mauceli E.W."/>
            <person name="DeCaprio D."/>
            <person name="Wade C.M."/>
            <person name="Butler J."/>
            <person name="Young S.K."/>
            <person name="Jaffe D.B."/>
            <person name="Calvo S.E."/>
            <person name="Nusbaum C."/>
            <person name="Galagan J.E."/>
            <person name="Birren B.W."/>
        </authorList>
    </citation>
    <scope>NUCLEOTIDE SEQUENCE [LARGE SCALE GENOMIC DNA]</scope>
    <source>
        <strain>DSM 14603 / FGSC 9021 / UM521</strain>
    </source>
</reference>
<accession>Q0H8W9</accession>
<feature type="chain" id="PRO_0000271140" description="ATP synthase subunit 9, mitochondrial">
    <location>
        <begin position="1"/>
        <end position="73"/>
    </location>
</feature>
<feature type="transmembrane region" description="Helical" evidence="2">
    <location>
        <begin position="12"/>
        <end position="32"/>
    </location>
</feature>
<feature type="transmembrane region" description="Helical" evidence="2">
    <location>
        <begin position="50"/>
        <end position="70"/>
    </location>
</feature>
<feature type="site" description="Reversibly protonated during proton transport" evidence="1">
    <location>
        <position position="57"/>
    </location>
</feature>
<keyword id="KW-0138">CF(0)</keyword>
<keyword id="KW-0375">Hydrogen ion transport</keyword>
<keyword id="KW-0406">Ion transport</keyword>
<keyword id="KW-0446">Lipid-binding</keyword>
<keyword id="KW-0472">Membrane</keyword>
<keyword id="KW-0496">Mitochondrion</keyword>
<keyword id="KW-0999">Mitochondrion inner membrane</keyword>
<keyword id="KW-1185">Reference proteome</keyword>
<keyword id="KW-0812">Transmembrane</keyword>
<keyword id="KW-1133">Transmembrane helix</keyword>
<keyword id="KW-0813">Transport</keyword>
<geneLocation type="mitochondrion"/>
<gene>
    <name type="primary">ATP9</name>
</gene>
<evidence type="ECO:0000250" key="1"/>
<evidence type="ECO:0000255" key="2"/>
<evidence type="ECO:0000305" key="3"/>
<name>ATP9_MYCMD</name>
<organism>
    <name type="scientific">Mycosarcoma maydis</name>
    <name type="common">Corn smut fungus</name>
    <name type="synonym">Ustilago maydis</name>
    <dbReference type="NCBI Taxonomy" id="5270"/>
    <lineage>
        <taxon>Eukaryota</taxon>
        <taxon>Fungi</taxon>
        <taxon>Dikarya</taxon>
        <taxon>Basidiomycota</taxon>
        <taxon>Ustilaginomycotina</taxon>
        <taxon>Ustilaginomycetes</taxon>
        <taxon>Ustilaginales</taxon>
        <taxon>Ustilaginaceae</taxon>
        <taxon>Mycosarcoma</taxon>
    </lineage>
</organism>